<reference key="1">
    <citation type="journal article" date="2004" name="Proc. Natl. Acad. Sci. U.S.A.">
        <title>The diploid genome sequence of Candida albicans.</title>
        <authorList>
            <person name="Jones T."/>
            <person name="Federspiel N.A."/>
            <person name="Chibana H."/>
            <person name="Dungan J."/>
            <person name="Kalman S."/>
            <person name="Magee B.B."/>
            <person name="Newport G."/>
            <person name="Thorstenson Y.R."/>
            <person name="Agabian N."/>
            <person name="Magee P.T."/>
            <person name="Davis R.W."/>
            <person name="Scherer S."/>
        </authorList>
    </citation>
    <scope>NUCLEOTIDE SEQUENCE [LARGE SCALE GENOMIC DNA]</scope>
    <source>
        <strain>SC5314 / ATCC MYA-2876</strain>
    </source>
</reference>
<reference key="2">
    <citation type="journal article" date="2007" name="Genome Biol.">
        <title>Assembly of the Candida albicans genome into sixteen supercontigs aligned on the eight chromosomes.</title>
        <authorList>
            <person name="van het Hoog M."/>
            <person name="Rast T.J."/>
            <person name="Martchenko M."/>
            <person name="Grindle S."/>
            <person name="Dignard D."/>
            <person name="Hogues H."/>
            <person name="Cuomo C."/>
            <person name="Berriman M."/>
            <person name="Scherer S."/>
            <person name="Magee B.B."/>
            <person name="Whiteway M."/>
            <person name="Chibana H."/>
            <person name="Nantel A."/>
            <person name="Magee P.T."/>
        </authorList>
    </citation>
    <scope>GENOME REANNOTATION</scope>
    <source>
        <strain>SC5314 / ATCC MYA-2876</strain>
    </source>
</reference>
<reference key="3">
    <citation type="journal article" date="2013" name="Genome Biol.">
        <title>Assembly of a phased diploid Candida albicans genome facilitates allele-specific measurements and provides a simple model for repeat and indel structure.</title>
        <authorList>
            <person name="Muzzey D."/>
            <person name="Schwartz K."/>
            <person name="Weissman J.S."/>
            <person name="Sherlock G."/>
        </authorList>
    </citation>
    <scope>NUCLEOTIDE SEQUENCE [LARGE SCALE GENOMIC DNA]</scope>
    <scope>GENOME REANNOTATION</scope>
    <source>
        <strain>SC5314 / ATCC MYA-2876</strain>
    </source>
</reference>
<reference evidence="5 6 7" key="4">
    <citation type="journal article" date="2022" name="Sci. Adv.">
        <title>E-site drug specificity of the human pathogen Candida albicans ribosome.</title>
        <authorList>
            <person name="Zgadzay Y."/>
            <person name="Kolosova O."/>
            <person name="Stetsenko A."/>
            <person name="Wu C."/>
            <person name="Bruchlen D."/>
            <person name="Usachev K."/>
            <person name="Validov S."/>
            <person name="Jenner L."/>
            <person name="Rogachev A."/>
            <person name="Yusupova G."/>
            <person name="Sachs M.S."/>
            <person name="Guskov A."/>
            <person name="Yusupov M."/>
        </authorList>
    </citation>
    <scope>STRUCTURE BY ELECTRON MICROSCOPY (2.32 ANGSTROMS) OF THE 80S RIBOSOME</scope>
    <scope>SUBUNIT</scope>
</reference>
<protein>
    <recommendedName>
        <fullName evidence="2">Large ribosomal subunit protein uL16</fullName>
    </recommendedName>
    <alternativeName>
        <fullName>60S ribosomal protein L10</fullName>
    </alternativeName>
</protein>
<name>RL10_CANAL</name>
<evidence type="ECO:0000269" key="1">
    <source>
    </source>
</evidence>
<evidence type="ECO:0000303" key="2">
    <source>
    </source>
</evidence>
<evidence type="ECO:0000305" key="3"/>
<evidence type="ECO:0000305" key="4">
    <source>
    </source>
</evidence>
<evidence type="ECO:0007744" key="5">
    <source>
        <dbReference type="PDB" id="7PZY"/>
    </source>
</evidence>
<evidence type="ECO:0007744" key="6">
    <source>
        <dbReference type="PDB" id="7Q0F"/>
    </source>
</evidence>
<evidence type="ECO:0007744" key="7">
    <source>
        <dbReference type="PDB" id="7Q0P"/>
    </source>
</evidence>
<accession>Q5AIB8</accession>
<comment type="function">
    <text evidence="4">Component of the ribosome, a large ribonucleoprotein complex responsible for the synthesis of proteins in the cell. The small ribosomal subunit (SSU) binds messenger RNAs (mRNAs) and translates the encoded message by selecting cognate aminoacyl-transfer RNA (tRNA) molecules. The large subunit (LSU) contains the ribosomal catalytic site termed the peptidyl transferase center (PTC), which catalyzes the formation of peptide bonds, thereby polymerizing the amino acids delivered by tRNAs into a polypeptide chain. The nascent polypeptides leave the ribosome through a tunnel in the LSU and interact with protein factors that function in enzymatic processing, targeting, and the membrane insertion of nascent chains at the exit of the ribosomal tunnel.</text>
</comment>
<comment type="subunit">
    <text evidence="1">Component of the large ribosomal subunit (PubMed:35613268). Mature ribosomes consist of a small (40S) and a large (60S) subunit (PubMed:35613268). The 40S subunit contains about 32 different proteins and 1 molecule of RNA (18S) (PubMed:35613268). The 60S subunit contains 45 different proteins and 3 molecules of RNA (25S, 5.8S and 5S) (PubMed:35613268).</text>
</comment>
<comment type="subcellular location">
    <subcellularLocation>
        <location evidence="4">Cytoplasm</location>
    </subcellularLocation>
</comment>
<comment type="similarity">
    <text evidence="3">Belongs to the universal ribosomal protein uL16 family.</text>
</comment>
<sequence>MARRPARCYRYCKNKPYPKSRYNRAVPDAKIRIYDLGRKKATVDEFPLCIHLVSNELEQLSSEALEAARICANKYITKVSGRDSFHLRVRVHPFHVLRINKMLSCAGADRLQQGMRGAWGKPHGLAARVSIGQIIMSARTKDSNKDVVIEGLRRARYKFPGQQKIIISKKWGFTPLNRDEYIAKKTNGEVIDDGAYVKFLSRKGNLEANLQQFPNYQYSA</sequence>
<dbReference type="EMBL" id="CP017623">
    <property type="protein sequence ID" value="AOW25930.1"/>
    <property type="molecule type" value="Genomic_DNA"/>
</dbReference>
<dbReference type="RefSeq" id="XP_721434.1">
    <property type="nucleotide sequence ID" value="XM_716341.2"/>
</dbReference>
<dbReference type="PDB" id="7PZY">
    <property type="method" value="EM"/>
    <property type="resolution" value="2.32 A"/>
    <property type="chains" value="r=1-220"/>
</dbReference>
<dbReference type="PDB" id="7Q08">
    <property type="method" value="EM"/>
    <property type="resolution" value="2.56 A"/>
    <property type="chains" value="r=1-220"/>
</dbReference>
<dbReference type="PDB" id="7Q0F">
    <property type="method" value="EM"/>
    <property type="resolution" value="2.64 A"/>
    <property type="chains" value="r=1-220"/>
</dbReference>
<dbReference type="PDB" id="7Q0P">
    <property type="method" value="EM"/>
    <property type="resolution" value="2.77 A"/>
    <property type="chains" value="r=1-220"/>
</dbReference>
<dbReference type="PDB" id="7Q0R">
    <property type="method" value="EM"/>
    <property type="resolution" value="2.67 A"/>
    <property type="chains" value="r=1-220"/>
</dbReference>
<dbReference type="PDB" id="8C3A">
    <property type="method" value="X-ray"/>
    <property type="resolution" value="3.00 A"/>
    <property type="chains" value="BE/r=1-220"/>
</dbReference>
<dbReference type="PDB" id="8CQ7">
    <property type="method" value="X-ray"/>
    <property type="resolution" value="3.20 A"/>
    <property type="chains" value="BE/r=1-220"/>
</dbReference>
<dbReference type="PDB" id="8CQW">
    <property type="method" value="X-ray"/>
    <property type="resolution" value="3.05 A"/>
    <property type="chains" value="BE/r=1-220"/>
</dbReference>
<dbReference type="PDB" id="8CRE">
    <property type="method" value="X-ray"/>
    <property type="resolution" value="3.00 A"/>
    <property type="chains" value="BE/r=1-220"/>
</dbReference>
<dbReference type="PDB" id="8OEQ">
    <property type="method" value="X-ray"/>
    <property type="resolution" value="3.30 A"/>
    <property type="chains" value="BE/r=1-220"/>
</dbReference>
<dbReference type="PDB" id="8OGJ">
    <property type="method" value="EM"/>
    <property type="resolution" value="3.10 A"/>
    <property type="chains" value="r=1-220"/>
</dbReference>
<dbReference type="PDB" id="8OH6">
    <property type="method" value="X-ray"/>
    <property type="resolution" value="3.35 A"/>
    <property type="chains" value="BE/r=1-220"/>
</dbReference>
<dbReference type="PDB" id="8OI5">
    <property type="method" value="X-ray"/>
    <property type="resolution" value="2.90 A"/>
    <property type="chains" value="BE/r=1-220"/>
</dbReference>
<dbReference type="PDB" id="8Q5I">
    <property type="method" value="EM"/>
    <property type="resolution" value="2.45 A"/>
    <property type="chains" value="r=1-220"/>
</dbReference>
<dbReference type="PDBsum" id="7PZY"/>
<dbReference type="PDBsum" id="7Q08"/>
<dbReference type="PDBsum" id="7Q0F"/>
<dbReference type="PDBsum" id="7Q0P"/>
<dbReference type="PDBsum" id="7Q0R"/>
<dbReference type="PDBsum" id="8C3A"/>
<dbReference type="PDBsum" id="8CQ7"/>
<dbReference type="PDBsum" id="8CQW"/>
<dbReference type="PDBsum" id="8CRE"/>
<dbReference type="PDBsum" id="8OEQ"/>
<dbReference type="PDBsum" id="8OGJ"/>
<dbReference type="PDBsum" id="8OH6"/>
<dbReference type="PDBsum" id="8OI5"/>
<dbReference type="PDBsum" id="8Q5I"/>
<dbReference type="EMDB" id="EMD-13737"/>
<dbReference type="EMDB" id="EMD-13741"/>
<dbReference type="EMDB" id="EMD-13744"/>
<dbReference type="EMDB" id="EMD-13749"/>
<dbReference type="EMDB" id="EMD-13750"/>
<dbReference type="EMDB" id="EMD-16874"/>
<dbReference type="SMR" id="Q5AIB8"/>
<dbReference type="FunCoup" id="Q5AIB8">
    <property type="interactions" value="1063"/>
</dbReference>
<dbReference type="STRING" id="237561.Q5AIB8"/>
<dbReference type="EnsemblFungi" id="C1_02460W_A-T">
    <property type="protein sequence ID" value="C1_02460W_A-T-p1"/>
    <property type="gene ID" value="C1_02460W_A"/>
</dbReference>
<dbReference type="GeneID" id="3636850"/>
<dbReference type="KEGG" id="cal:CAALFM_C102460WA"/>
<dbReference type="CGD" id="CAL0000194016">
    <property type="gene designation" value="RPL10"/>
</dbReference>
<dbReference type="VEuPathDB" id="FungiDB:C1_02460W_A"/>
<dbReference type="eggNOG" id="KOG0857">
    <property type="taxonomic scope" value="Eukaryota"/>
</dbReference>
<dbReference type="HOGENOM" id="CLU_084051_0_0_1"/>
<dbReference type="InParanoid" id="Q5AIB8"/>
<dbReference type="OMA" id="HHVIREN"/>
<dbReference type="OrthoDB" id="10258869at2759"/>
<dbReference type="Proteomes" id="UP000000559">
    <property type="component" value="Chromosome 1"/>
</dbReference>
<dbReference type="GO" id="GO:0009986">
    <property type="term" value="C:cell surface"/>
    <property type="evidence" value="ECO:0000314"/>
    <property type="project" value="CGD"/>
</dbReference>
<dbReference type="GO" id="GO:0022625">
    <property type="term" value="C:cytosolic large ribosomal subunit"/>
    <property type="evidence" value="ECO:0000318"/>
    <property type="project" value="GO_Central"/>
</dbReference>
<dbReference type="GO" id="GO:0003735">
    <property type="term" value="F:structural constituent of ribosome"/>
    <property type="evidence" value="ECO:0000318"/>
    <property type="project" value="GO_Central"/>
</dbReference>
<dbReference type="GO" id="GO:0006412">
    <property type="term" value="P:translation"/>
    <property type="evidence" value="ECO:0000318"/>
    <property type="project" value="GO_Central"/>
</dbReference>
<dbReference type="CDD" id="cd01433">
    <property type="entry name" value="Ribosomal_L16_L10e"/>
    <property type="match status" value="1"/>
</dbReference>
<dbReference type="FunFam" id="3.90.1170.10:FF:000002">
    <property type="entry name" value="60S ribosomal protein L10"/>
    <property type="match status" value="1"/>
</dbReference>
<dbReference type="Gene3D" id="3.30.60.300">
    <property type="match status" value="1"/>
</dbReference>
<dbReference type="Gene3D" id="3.90.1170.10">
    <property type="entry name" value="Ribosomal protein L10e/L16"/>
    <property type="match status" value="1"/>
</dbReference>
<dbReference type="InterPro" id="IPR047873">
    <property type="entry name" value="Ribosomal_uL16"/>
</dbReference>
<dbReference type="InterPro" id="IPR018255">
    <property type="entry name" value="Ribosomal_uL16_CS_euk_arc"/>
</dbReference>
<dbReference type="InterPro" id="IPR016180">
    <property type="entry name" value="Ribosomal_uL16_dom"/>
</dbReference>
<dbReference type="InterPro" id="IPR001197">
    <property type="entry name" value="Ribosomal_uL16_euk_arch"/>
</dbReference>
<dbReference type="InterPro" id="IPR036920">
    <property type="entry name" value="Ribosomal_uL16_sf"/>
</dbReference>
<dbReference type="NCBIfam" id="NF003239">
    <property type="entry name" value="PRK04199.1-4"/>
    <property type="match status" value="1"/>
</dbReference>
<dbReference type="NCBIfam" id="TIGR00279">
    <property type="entry name" value="uL16_euk_arch"/>
    <property type="match status" value="1"/>
</dbReference>
<dbReference type="PANTHER" id="PTHR11726">
    <property type="entry name" value="60S RIBOSOMAL PROTEIN L10"/>
    <property type="match status" value="1"/>
</dbReference>
<dbReference type="Pfam" id="PF00252">
    <property type="entry name" value="Ribosomal_L16"/>
    <property type="match status" value="1"/>
</dbReference>
<dbReference type="PIRSF" id="PIRSF005590">
    <property type="entry name" value="Ribosomal_L10"/>
    <property type="match status" value="1"/>
</dbReference>
<dbReference type="SUPFAM" id="SSF54686">
    <property type="entry name" value="Ribosomal protein L16p/L10e"/>
    <property type="match status" value="1"/>
</dbReference>
<dbReference type="PROSITE" id="PS01257">
    <property type="entry name" value="RIBOSOMAL_L10E"/>
    <property type="match status" value="1"/>
</dbReference>
<gene>
    <name evidence="2" type="primary">RPL10</name>
    <name type="ordered locus">orf19.2935</name>
    <name type="ORF">CAALFM_C102460WA</name>
</gene>
<keyword id="KW-0002">3D-structure</keyword>
<keyword id="KW-0963">Cytoplasm</keyword>
<keyword id="KW-1185">Reference proteome</keyword>
<keyword id="KW-0687">Ribonucleoprotein</keyword>
<keyword id="KW-0689">Ribosomal protein</keyword>
<feature type="chain" id="PRO_0000456525" description="Large ribosomal subunit protein uL16">
    <location>
        <begin position="1"/>
        <end position="220"/>
    </location>
</feature>
<organism>
    <name type="scientific">Candida albicans (strain SC5314 / ATCC MYA-2876)</name>
    <name type="common">Yeast</name>
    <dbReference type="NCBI Taxonomy" id="237561"/>
    <lineage>
        <taxon>Eukaryota</taxon>
        <taxon>Fungi</taxon>
        <taxon>Dikarya</taxon>
        <taxon>Ascomycota</taxon>
        <taxon>Saccharomycotina</taxon>
        <taxon>Pichiomycetes</taxon>
        <taxon>Debaryomycetaceae</taxon>
        <taxon>Candida/Lodderomyces clade</taxon>
        <taxon>Candida</taxon>
    </lineage>
</organism>
<proteinExistence type="evidence at protein level"/>